<geneLocation type="plasmid">
    <name>pSymA</name>
    <name>megaplasmid 1</name>
</geneLocation>
<gene>
    <name evidence="1" type="primary">nuoK2</name>
    <name type="ordered locus">RA0840</name>
    <name type="ORF">SMa1544</name>
</gene>
<dbReference type="EC" id="7.1.1.-" evidence="1"/>
<dbReference type="EMBL" id="AE006469">
    <property type="protein sequence ID" value="AAK65498.1"/>
    <property type="molecule type" value="Genomic_DNA"/>
</dbReference>
<dbReference type="EMBL" id="AJ245399">
    <property type="protein sequence ID" value="CAC14147.1"/>
    <property type="molecule type" value="Genomic_DNA"/>
</dbReference>
<dbReference type="PIR" id="H95366">
    <property type="entry name" value="H95366"/>
</dbReference>
<dbReference type="RefSeq" id="NP_436086.1">
    <property type="nucleotide sequence ID" value="NC_003037.1"/>
</dbReference>
<dbReference type="SMR" id="Q9EV71"/>
<dbReference type="EnsemblBacteria" id="AAK65498">
    <property type="protein sequence ID" value="AAK65498"/>
    <property type="gene ID" value="SMa1544"/>
</dbReference>
<dbReference type="KEGG" id="sme:SMa1544"/>
<dbReference type="PATRIC" id="fig|266834.11.peg.872"/>
<dbReference type="HOGENOM" id="CLU_144724_1_1_5"/>
<dbReference type="PRO" id="PR:Q9EV71"/>
<dbReference type="Proteomes" id="UP000001976">
    <property type="component" value="Plasmid pSymA"/>
</dbReference>
<dbReference type="GO" id="GO:0030964">
    <property type="term" value="C:NADH dehydrogenase complex"/>
    <property type="evidence" value="ECO:0007669"/>
    <property type="project" value="TreeGrafter"/>
</dbReference>
<dbReference type="GO" id="GO:0005886">
    <property type="term" value="C:plasma membrane"/>
    <property type="evidence" value="ECO:0007669"/>
    <property type="project" value="UniProtKB-SubCell"/>
</dbReference>
<dbReference type="GO" id="GO:0050136">
    <property type="term" value="F:NADH:ubiquinone reductase (non-electrogenic) activity"/>
    <property type="evidence" value="ECO:0007669"/>
    <property type="project" value="UniProtKB-UniRule"/>
</dbReference>
<dbReference type="GO" id="GO:0048038">
    <property type="term" value="F:quinone binding"/>
    <property type="evidence" value="ECO:0007669"/>
    <property type="project" value="UniProtKB-KW"/>
</dbReference>
<dbReference type="GO" id="GO:0042773">
    <property type="term" value="P:ATP synthesis coupled electron transport"/>
    <property type="evidence" value="ECO:0007669"/>
    <property type="project" value="InterPro"/>
</dbReference>
<dbReference type="FunFam" id="1.10.287.3510:FF:000001">
    <property type="entry name" value="NADH-quinone oxidoreductase subunit K"/>
    <property type="match status" value="1"/>
</dbReference>
<dbReference type="Gene3D" id="1.10.287.3510">
    <property type="match status" value="1"/>
</dbReference>
<dbReference type="HAMAP" id="MF_01456">
    <property type="entry name" value="NDH1_NuoK"/>
    <property type="match status" value="1"/>
</dbReference>
<dbReference type="InterPro" id="IPR001133">
    <property type="entry name" value="NADH_UbQ_OxRdtase_chain4L/K"/>
</dbReference>
<dbReference type="InterPro" id="IPR039428">
    <property type="entry name" value="NUOK/Mnh_C1-like"/>
</dbReference>
<dbReference type="NCBIfam" id="NF004320">
    <property type="entry name" value="PRK05715.1-2"/>
    <property type="match status" value="1"/>
</dbReference>
<dbReference type="NCBIfam" id="NF004321">
    <property type="entry name" value="PRK05715.1-3"/>
    <property type="match status" value="1"/>
</dbReference>
<dbReference type="NCBIfam" id="NF004323">
    <property type="entry name" value="PRK05715.1-5"/>
    <property type="match status" value="1"/>
</dbReference>
<dbReference type="PANTHER" id="PTHR11434:SF16">
    <property type="entry name" value="NADH-UBIQUINONE OXIDOREDUCTASE CHAIN 4L"/>
    <property type="match status" value="1"/>
</dbReference>
<dbReference type="PANTHER" id="PTHR11434">
    <property type="entry name" value="NADH-UBIQUINONE OXIDOREDUCTASE SUBUNIT ND4L"/>
    <property type="match status" value="1"/>
</dbReference>
<dbReference type="Pfam" id="PF00420">
    <property type="entry name" value="Oxidored_q2"/>
    <property type="match status" value="1"/>
</dbReference>
<feature type="chain" id="PRO_0000390195" description="NADH-quinone oxidoreductase subunit K 2">
    <location>
        <begin position="1"/>
        <end position="100"/>
    </location>
</feature>
<feature type="transmembrane region" description="Helical" evidence="1">
    <location>
        <begin position="4"/>
        <end position="24"/>
    </location>
</feature>
<feature type="transmembrane region" description="Helical" evidence="1">
    <location>
        <begin position="28"/>
        <end position="48"/>
    </location>
</feature>
<feature type="transmembrane region" description="Helical" evidence="1">
    <location>
        <begin position="60"/>
        <end position="80"/>
    </location>
</feature>
<comment type="function">
    <text evidence="1">NDH-1 shuttles electrons from NADH, via FMN and iron-sulfur (Fe-S) centers, to quinones in the respiratory chain. The immediate electron acceptor for the enzyme in this species is believed to be ubiquinone. Couples the redox reaction to proton translocation (for every two electrons transferred, four hydrogen ions are translocated across the cytoplasmic membrane), and thus conserves the redox energy in a proton gradient.</text>
</comment>
<comment type="catalytic activity">
    <reaction evidence="1">
        <text>a quinone + NADH + 5 H(+)(in) = a quinol + NAD(+) + 4 H(+)(out)</text>
        <dbReference type="Rhea" id="RHEA:57888"/>
        <dbReference type="ChEBI" id="CHEBI:15378"/>
        <dbReference type="ChEBI" id="CHEBI:24646"/>
        <dbReference type="ChEBI" id="CHEBI:57540"/>
        <dbReference type="ChEBI" id="CHEBI:57945"/>
        <dbReference type="ChEBI" id="CHEBI:132124"/>
    </reaction>
</comment>
<comment type="subunit">
    <text evidence="1">NDH-1 is composed of 14 different subunits. Subunits NuoA, H, J, K, L, M, N constitute the membrane sector of the complex.</text>
</comment>
<comment type="subcellular location">
    <subcellularLocation>
        <location evidence="1">Cell inner membrane</location>
        <topology evidence="1">Multi-pass membrane protein</topology>
    </subcellularLocation>
</comment>
<comment type="similarity">
    <text evidence="1">Belongs to the complex I subunit 4L family.</text>
</comment>
<reference key="1">
    <citation type="submission" date="2000-10" db="EMBL/GenBank/DDBJ databases">
        <title>Sinorhizobium meliloti carries two sets of nuo genes.</title>
        <authorList>
            <person name="Putnoky P."/>
            <person name="Jady B."/>
            <person name="Chellapilla K.P."/>
            <person name="Barta F."/>
            <person name="Kiss E."/>
        </authorList>
    </citation>
    <scope>NUCLEOTIDE SEQUENCE [GENOMIC DNA]</scope>
    <source>
        <strain>41</strain>
    </source>
</reference>
<reference key="2">
    <citation type="journal article" date="2001" name="Proc. Natl. Acad. Sci. U.S.A.">
        <title>Nucleotide sequence and predicted functions of the entire Sinorhizobium meliloti pSymA megaplasmid.</title>
        <authorList>
            <person name="Barnett M.J."/>
            <person name="Fisher R.F."/>
            <person name="Jones T."/>
            <person name="Komp C."/>
            <person name="Abola A.P."/>
            <person name="Barloy-Hubler F."/>
            <person name="Bowser L."/>
            <person name="Capela D."/>
            <person name="Galibert F."/>
            <person name="Gouzy J."/>
            <person name="Gurjal M."/>
            <person name="Hong A."/>
            <person name="Huizar L."/>
            <person name="Hyman R.W."/>
            <person name="Kahn D."/>
            <person name="Kahn M.L."/>
            <person name="Kalman S."/>
            <person name="Keating D.H."/>
            <person name="Palm C."/>
            <person name="Peck M.C."/>
            <person name="Surzycki R."/>
            <person name="Wells D.H."/>
            <person name="Yeh K.-C."/>
            <person name="Davis R.W."/>
            <person name="Federspiel N.A."/>
            <person name="Long S.R."/>
        </authorList>
    </citation>
    <scope>NUCLEOTIDE SEQUENCE [LARGE SCALE GENOMIC DNA]</scope>
    <source>
        <strain>1021</strain>
        <plasmid>pSymA (megaplasmid 1)</plasmid>
    </source>
</reference>
<reference key="3">
    <citation type="journal article" date="2001" name="Science">
        <title>The composite genome of the legume symbiont Sinorhizobium meliloti.</title>
        <authorList>
            <person name="Galibert F."/>
            <person name="Finan T.M."/>
            <person name="Long S.R."/>
            <person name="Puehler A."/>
            <person name="Abola P."/>
            <person name="Ampe F."/>
            <person name="Barloy-Hubler F."/>
            <person name="Barnett M.J."/>
            <person name="Becker A."/>
            <person name="Boistard P."/>
            <person name="Bothe G."/>
            <person name="Boutry M."/>
            <person name="Bowser L."/>
            <person name="Buhrmester J."/>
            <person name="Cadieu E."/>
            <person name="Capela D."/>
            <person name="Chain P."/>
            <person name="Cowie A."/>
            <person name="Davis R.W."/>
            <person name="Dreano S."/>
            <person name="Federspiel N.A."/>
            <person name="Fisher R.F."/>
            <person name="Gloux S."/>
            <person name="Godrie T."/>
            <person name="Goffeau A."/>
            <person name="Golding B."/>
            <person name="Gouzy J."/>
            <person name="Gurjal M."/>
            <person name="Hernandez-Lucas I."/>
            <person name="Hong A."/>
            <person name="Huizar L."/>
            <person name="Hyman R.W."/>
            <person name="Jones T."/>
            <person name="Kahn D."/>
            <person name="Kahn M.L."/>
            <person name="Kalman S."/>
            <person name="Keating D.H."/>
            <person name="Kiss E."/>
            <person name="Komp C."/>
            <person name="Lelaure V."/>
            <person name="Masuy D."/>
            <person name="Palm C."/>
            <person name="Peck M.C."/>
            <person name="Pohl T.M."/>
            <person name="Portetelle D."/>
            <person name="Purnelle B."/>
            <person name="Ramsperger U."/>
            <person name="Surzycki R."/>
            <person name="Thebault P."/>
            <person name="Vandenbol M."/>
            <person name="Vorhoelter F.J."/>
            <person name="Weidner S."/>
            <person name="Wells D.H."/>
            <person name="Wong K."/>
            <person name="Yeh K.-C."/>
            <person name="Batut J."/>
        </authorList>
    </citation>
    <scope>NUCLEOTIDE SEQUENCE [LARGE SCALE GENOMIC DNA]</scope>
    <source>
        <strain>1021</strain>
    </source>
</reference>
<accession>Q9EV71</accession>
<evidence type="ECO:0000255" key="1">
    <source>
        <dbReference type="HAMAP-Rule" id="MF_01456"/>
    </source>
</evidence>
<protein>
    <recommendedName>
        <fullName evidence="1">NADH-quinone oxidoreductase subunit K 2</fullName>
        <ecNumber evidence="1">7.1.1.-</ecNumber>
    </recommendedName>
    <alternativeName>
        <fullName evidence="1">NADH dehydrogenase I subunit K 2</fullName>
    </alternativeName>
    <alternativeName>
        <fullName evidence="1">NDH-1 subunit K 2</fullName>
    </alternativeName>
</protein>
<sequence length="100" mass="10921">MVPLWWSILLGVALFVIGAGGVLLRRNILIVLMSLELLLNSVNINFIAFGQYYDDFRGQIFAIFVIAITAAEVAVALGILVALVRNKSTLKVDDVTIMKG</sequence>
<keyword id="KW-0997">Cell inner membrane</keyword>
<keyword id="KW-1003">Cell membrane</keyword>
<keyword id="KW-0472">Membrane</keyword>
<keyword id="KW-0520">NAD</keyword>
<keyword id="KW-0614">Plasmid</keyword>
<keyword id="KW-0874">Quinone</keyword>
<keyword id="KW-1185">Reference proteome</keyword>
<keyword id="KW-1278">Translocase</keyword>
<keyword id="KW-0812">Transmembrane</keyword>
<keyword id="KW-1133">Transmembrane helix</keyword>
<keyword id="KW-0813">Transport</keyword>
<keyword id="KW-0830">Ubiquinone</keyword>
<proteinExistence type="inferred from homology"/>
<organism>
    <name type="scientific">Rhizobium meliloti (strain 1021)</name>
    <name type="common">Ensifer meliloti</name>
    <name type="synonym">Sinorhizobium meliloti</name>
    <dbReference type="NCBI Taxonomy" id="266834"/>
    <lineage>
        <taxon>Bacteria</taxon>
        <taxon>Pseudomonadati</taxon>
        <taxon>Pseudomonadota</taxon>
        <taxon>Alphaproteobacteria</taxon>
        <taxon>Hyphomicrobiales</taxon>
        <taxon>Rhizobiaceae</taxon>
        <taxon>Sinorhizobium/Ensifer group</taxon>
        <taxon>Sinorhizobium</taxon>
    </lineage>
</organism>
<name>NUOK2_RHIME</name>